<feature type="chain" id="PRO_0000269409" description="Large ribosomal subunit protein bL21">
    <location>
        <begin position="1"/>
        <end position="125"/>
    </location>
</feature>
<sequence length="125" mass="13926">MADTKPAAKAAPETSDAYAIVEASGTQIWLQTNRYYDLDRLQADVDETLKLDNVLLVKDSKGTTLGQPYVKDASVELKVMAHRRGPKVIVYKMRPKKKTRRKNGHRQELTRVMVQSISVGGKAIG</sequence>
<protein>
    <recommendedName>
        <fullName evidence="1">Large ribosomal subunit protein bL21</fullName>
    </recommendedName>
    <alternativeName>
        <fullName evidence="2">50S ribosomal protein L21</fullName>
    </alternativeName>
</protein>
<keyword id="KW-1185">Reference proteome</keyword>
<keyword id="KW-0687">Ribonucleoprotein</keyword>
<keyword id="KW-0689">Ribosomal protein</keyword>
<keyword id="KW-0694">RNA-binding</keyword>
<keyword id="KW-0699">rRNA-binding</keyword>
<reference key="1">
    <citation type="submission" date="2005-08" db="EMBL/GenBank/DDBJ databases">
        <title>Complete sequence of Synechococcus sp. CC9902.</title>
        <authorList>
            <person name="Copeland A."/>
            <person name="Lucas S."/>
            <person name="Lapidus A."/>
            <person name="Barry K."/>
            <person name="Detter J.C."/>
            <person name="Glavina T."/>
            <person name="Hammon N."/>
            <person name="Israni S."/>
            <person name="Pitluck S."/>
            <person name="Martinez M."/>
            <person name="Schmutz J."/>
            <person name="Larimer F."/>
            <person name="Land M."/>
            <person name="Kyrpides N."/>
            <person name="Ivanova N."/>
            <person name="Richardson P."/>
        </authorList>
    </citation>
    <scope>NUCLEOTIDE SEQUENCE [LARGE SCALE GENOMIC DNA]</scope>
    <source>
        <strain>CC9902</strain>
    </source>
</reference>
<accession>Q3AZG3</accession>
<comment type="function">
    <text evidence="1">This protein binds to 23S rRNA in the presence of protein L20.</text>
</comment>
<comment type="subunit">
    <text evidence="1">Part of the 50S ribosomal subunit. Contacts protein L20.</text>
</comment>
<comment type="similarity">
    <text evidence="1">Belongs to the bacterial ribosomal protein bL21 family.</text>
</comment>
<gene>
    <name evidence="1" type="primary">rplU</name>
    <name evidence="1" type="synonym">rpl21</name>
    <name type="ordered locus">Syncc9902_0546</name>
</gene>
<name>RL21_SYNS9</name>
<evidence type="ECO:0000255" key="1">
    <source>
        <dbReference type="HAMAP-Rule" id="MF_01363"/>
    </source>
</evidence>
<evidence type="ECO:0000305" key="2"/>
<proteinExistence type="inferred from homology"/>
<organism>
    <name type="scientific">Synechococcus sp. (strain CC9902)</name>
    <dbReference type="NCBI Taxonomy" id="316279"/>
    <lineage>
        <taxon>Bacteria</taxon>
        <taxon>Bacillati</taxon>
        <taxon>Cyanobacteriota</taxon>
        <taxon>Cyanophyceae</taxon>
        <taxon>Synechococcales</taxon>
        <taxon>Synechococcaceae</taxon>
        <taxon>Synechococcus</taxon>
    </lineage>
</organism>
<dbReference type="EMBL" id="CP000097">
    <property type="protein sequence ID" value="ABB25514.1"/>
    <property type="molecule type" value="Genomic_DNA"/>
</dbReference>
<dbReference type="RefSeq" id="WP_011359361.1">
    <property type="nucleotide sequence ID" value="NC_007513.1"/>
</dbReference>
<dbReference type="SMR" id="Q3AZG3"/>
<dbReference type="STRING" id="316279.Syncc9902_0546"/>
<dbReference type="KEGG" id="sye:Syncc9902_0546"/>
<dbReference type="eggNOG" id="COG0261">
    <property type="taxonomic scope" value="Bacteria"/>
</dbReference>
<dbReference type="HOGENOM" id="CLU_061463_6_0_3"/>
<dbReference type="OrthoDB" id="9813334at2"/>
<dbReference type="Proteomes" id="UP000002712">
    <property type="component" value="Chromosome"/>
</dbReference>
<dbReference type="GO" id="GO:0005737">
    <property type="term" value="C:cytoplasm"/>
    <property type="evidence" value="ECO:0007669"/>
    <property type="project" value="UniProtKB-ARBA"/>
</dbReference>
<dbReference type="GO" id="GO:1990904">
    <property type="term" value="C:ribonucleoprotein complex"/>
    <property type="evidence" value="ECO:0007669"/>
    <property type="project" value="UniProtKB-KW"/>
</dbReference>
<dbReference type="GO" id="GO:0005840">
    <property type="term" value="C:ribosome"/>
    <property type="evidence" value="ECO:0007669"/>
    <property type="project" value="UniProtKB-KW"/>
</dbReference>
<dbReference type="GO" id="GO:0019843">
    <property type="term" value="F:rRNA binding"/>
    <property type="evidence" value="ECO:0007669"/>
    <property type="project" value="UniProtKB-UniRule"/>
</dbReference>
<dbReference type="GO" id="GO:0003735">
    <property type="term" value="F:structural constituent of ribosome"/>
    <property type="evidence" value="ECO:0007669"/>
    <property type="project" value="InterPro"/>
</dbReference>
<dbReference type="GO" id="GO:0006412">
    <property type="term" value="P:translation"/>
    <property type="evidence" value="ECO:0007669"/>
    <property type="project" value="UniProtKB-UniRule"/>
</dbReference>
<dbReference type="HAMAP" id="MF_01363">
    <property type="entry name" value="Ribosomal_bL21"/>
    <property type="match status" value="1"/>
</dbReference>
<dbReference type="InterPro" id="IPR028909">
    <property type="entry name" value="bL21-like"/>
</dbReference>
<dbReference type="InterPro" id="IPR036164">
    <property type="entry name" value="bL21-like_sf"/>
</dbReference>
<dbReference type="InterPro" id="IPR001787">
    <property type="entry name" value="Ribosomal_bL21"/>
</dbReference>
<dbReference type="InterPro" id="IPR018258">
    <property type="entry name" value="Ribosomal_bL21_CS"/>
</dbReference>
<dbReference type="NCBIfam" id="TIGR00061">
    <property type="entry name" value="L21"/>
    <property type="match status" value="1"/>
</dbReference>
<dbReference type="PANTHER" id="PTHR21349">
    <property type="entry name" value="50S RIBOSOMAL PROTEIN L21"/>
    <property type="match status" value="1"/>
</dbReference>
<dbReference type="PANTHER" id="PTHR21349:SF0">
    <property type="entry name" value="LARGE RIBOSOMAL SUBUNIT PROTEIN BL21M"/>
    <property type="match status" value="1"/>
</dbReference>
<dbReference type="Pfam" id="PF00829">
    <property type="entry name" value="Ribosomal_L21p"/>
    <property type="match status" value="1"/>
</dbReference>
<dbReference type="SUPFAM" id="SSF141091">
    <property type="entry name" value="L21p-like"/>
    <property type="match status" value="1"/>
</dbReference>
<dbReference type="PROSITE" id="PS01169">
    <property type="entry name" value="RIBOSOMAL_L21"/>
    <property type="match status" value="1"/>
</dbReference>